<dbReference type="EC" id="6.3.5.-" evidence="1"/>
<dbReference type="EMBL" id="AP008957">
    <property type="protein sequence ID" value="BAH33098.1"/>
    <property type="molecule type" value="Genomic_DNA"/>
</dbReference>
<dbReference type="RefSeq" id="WP_019747920.1">
    <property type="nucleotide sequence ID" value="NC_012490.1"/>
</dbReference>
<dbReference type="SMR" id="C0ZXL3"/>
<dbReference type="GeneID" id="57487560"/>
<dbReference type="KEGG" id="rer:RER_23900"/>
<dbReference type="eggNOG" id="COG0064">
    <property type="taxonomic scope" value="Bacteria"/>
</dbReference>
<dbReference type="HOGENOM" id="CLU_019240_0_0_11"/>
<dbReference type="Proteomes" id="UP000002204">
    <property type="component" value="Chromosome"/>
</dbReference>
<dbReference type="GO" id="GO:0050566">
    <property type="term" value="F:asparaginyl-tRNA synthase (glutamine-hydrolyzing) activity"/>
    <property type="evidence" value="ECO:0007669"/>
    <property type="project" value="RHEA"/>
</dbReference>
<dbReference type="GO" id="GO:0005524">
    <property type="term" value="F:ATP binding"/>
    <property type="evidence" value="ECO:0007669"/>
    <property type="project" value="UniProtKB-KW"/>
</dbReference>
<dbReference type="GO" id="GO:0050567">
    <property type="term" value="F:glutaminyl-tRNA synthase (glutamine-hydrolyzing) activity"/>
    <property type="evidence" value="ECO:0007669"/>
    <property type="project" value="UniProtKB-UniRule"/>
</dbReference>
<dbReference type="GO" id="GO:0070681">
    <property type="term" value="P:glutaminyl-tRNAGln biosynthesis via transamidation"/>
    <property type="evidence" value="ECO:0007669"/>
    <property type="project" value="TreeGrafter"/>
</dbReference>
<dbReference type="GO" id="GO:0006412">
    <property type="term" value="P:translation"/>
    <property type="evidence" value="ECO:0007669"/>
    <property type="project" value="UniProtKB-UniRule"/>
</dbReference>
<dbReference type="FunFam" id="1.10.10.410:FF:000002">
    <property type="entry name" value="Aspartyl/glutamyl-tRNA(Asn/Gln) amidotransferase subunit B"/>
    <property type="match status" value="1"/>
</dbReference>
<dbReference type="Gene3D" id="1.10.10.410">
    <property type="match status" value="1"/>
</dbReference>
<dbReference type="HAMAP" id="MF_00121">
    <property type="entry name" value="GatB"/>
    <property type="match status" value="1"/>
</dbReference>
<dbReference type="InterPro" id="IPR017959">
    <property type="entry name" value="Asn/Gln-tRNA_amidoTrfase_suB/E"/>
</dbReference>
<dbReference type="InterPro" id="IPR006075">
    <property type="entry name" value="Asn/Gln-tRNA_Trfase_suB/E_cat"/>
</dbReference>
<dbReference type="InterPro" id="IPR018027">
    <property type="entry name" value="Asn/Gln_amidotransferase"/>
</dbReference>
<dbReference type="InterPro" id="IPR003789">
    <property type="entry name" value="Asn/Gln_tRNA_amidoTrase-B-like"/>
</dbReference>
<dbReference type="InterPro" id="IPR004413">
    <property type="entry name" value="GatB"/>
</dbReference>
<dbReference type="InterPro" id="IPR023168">
    <property type="entry name" value="GatB_Yqey_C_2"/>
</dbReference>
<dbReference type="InterPro" id="IPR014746">
    <property type="entry name" value="Gln_synth/guanido_kin_cat_dom"/>
</dbReference>
<dbReference type="NCBIfam" id="TIGR00133">
    <property type="entry name" value="gatB"/>
    <property type="match status" value="1"/>
</dbReference>
<dbReference type="NCBIfam" id="NF004012">
    <property type="entry name" value="PRK05477.1-2"/>
    <property type="match status" value="1"/>
</dbReference>
<dbReference type="NCBIfam" id="NF004013">
    <property type="entry name" value="PRK05477.1-3"/>
    <property type="match status" value="1"/>
</dbReference>
<dbReference type="NCBIfam" id="NF004014">
    <property type="entry name" value="PRK05477.1-4"/>
    <property type="match status" value="1"/>
</dbReference>
<dbReference type="PANTHER" id="PTHR11659">
    <property type="entry name" value="GLUTAMYL-TRNA GLN AMIDOTRANSFERASE SUBUNIT B MITOCHONDRIAL AND PROKARYOTIC PET112-RELATED"/>
    <property type="match status" value="1"/>
</dbReference>
<dbReference type="PANTHER" id="PTHR11659:SF0">
    <property type="entry name" value="GLUTAMYL-TRNA(GLN) AMIDOTRANSFERASE SUBUNIT B, MITOCHONDRIAL"/>
    <property type="match status" value="1"/>
</dbReference>
<dbReference type="Pfam" id="PF02934">
    <property type="entry name" value="GatB_N"/>
    <property type="match status" value="1"/>
</dbReference>
<dbReference type="Pfam" id="PF02637">
    <property type="entry name" value="GatB_Yqey"/>
    <property type="match status" value="1"/>
</dbReference>
<dbReference type="SMART" id="SM00845">
    <property type="entry name" value="GatB_Yqey"/>
    <property type="match status" value="1"/>
</dbReference>
<dbReference type="SUPFAM" id="SSF89095">
    <property type="entry name" value="GatB/YqeY motif"/>
    <property type="match status" value="1"/>
</dbReference>
<dbReference type="SUPFAM" id="SSF55931">
    <property type="entry name" value="Glutamine synthetase/guanido kinase"/>
    <property type="match status" value="1"/>
</dbReference>
<sequence length="503" mass="54676">MTAVDAPDILDYDEVLTKYEPVMGMEVHVELGTATKMFCPCPTEFGAEPNTQVCPVCLGMPGSLPVVNAAAVESAIRIGLALNCSITPWGRFARKNYFYPDQPKNYQISQYDEPIATEGYLDVILDDGTTWRVDIERAHMEEDTGKSLHVGGATGRIHGASHSLLDYNRAGVPLVEIVTKTIHGAGERAPEVARAYVTALRDLLKSLDVSDVRMDQGSMRCDANISLMPIGAKELGTRTETKNVNSLKSVEVAVRYEMRRQAAVLDAGGEVIQETRHFQEADGTTAAGRRKETAEDYRYFPEPDLEPVAPSAEWVEELRGTLPELPWIRRARIQKDWGISDEVMRDLVNAGAIDLVIATTEAGASPEAARSWWLSYLSQQANTRGVELGALPITPAQVAQVVALIDSGKLNNKVARQVVDHVLDGEGDPEQVVAAHPELVVERDETKLKAAVDEALAANPDIADKIRSGKVQAAGKIVGDVMKATRGQADAARVKELVIEACS</sequence>
<feature type="chain" id="PRO_1000203057" description="Aspartyl/glutamyl-tRNA(Asn/Gln) amidotransferase subunit B">
    <location>
        <begin position="1"/>
        <end position="503"/>
    </location>
</feature>
<keyword id="KW-0067">ATP-binding</keyword>
<keyword id="KW-0436">Ligase</keyword>
<keyword id="KW-0547">Nucleotide-binding</keyword>
<keyword id="KW-0648">Protein biosynthesis</keyword>
<evidence type="ECO:0000255" key="1">
    <source>
        <dbReference type="HAMAP-Rule" id="MF_00121"/>
    </source>
</evidence>
<reference key="1">
    <citation type="submission" date="2005-03" db="EMBL/GenBank/DDBJ databases">
        <title>Comparison of the complete genome sequences of Rhodococcus erythropolis PR4 and Rhodococcus opacus B4.</title>
        <authorList>
            <person name="Takarada H."/>
            <person name="Sekine M."/>
            <person name="Hosoyama A."/>
            <person name="Yamada R."/>
            <person name="Fujisawa T."/>
            <person name="Omata S."/>
            <person name="Shimizu A."/>
            <person name="Tsukatani N."/>
            <person name="Tanikawa S."/>
            <person name="Fujita N."/>
            <person name="Harayama S."/>
        </authorList>
    </citation>
    <scope>NUCLEOTIDE SEQUENCE [LARGE SCALE GENOMIC DNA]</scope>
    <source>
        <strain>PR4 / NBRC 100887</strain>
    </source>
</reference>
<gene>
    <name evidence="1" type="primary">gatB</name>
    <name type="ordered locus">RER_23900</name>
</gene>
<accession>C0ZXL3</accession>
<organism>
    <name type="scientific">Rhodococcus erythropolis (strain PR4 / NBRC 100887)</name>
    <dbReference type="NCBI Taxonomy" id="234621"/>
    <lineage>
        <taxon>Bacteria</taxon>
        <taxon>Bacillati</taxon>
        <taxon>Actinomycetota</taxon>
        <taxon>Actinomycetes</taxon>
        <taxon>Mycobacteriales</taxon>
        <taxon>Nocardiaceae</taxon>
        <taxon>Rhodococcus</taxon>
        <taxon>Rhodococcus erythropolis group</taxon>
    </lineage>
</organism>
<comment type="function">
    <text evidence="1">Allows the formation of correctly charged Asn-tRNA(Asn) or Gln-tRNA(Gln) through the transamidation of misacylated Asp-tRNA(Asn) or Glu-tRNA(Gln) in organisms which lack either or both of asparaginyl-tRNA or glutaminyl-tRNA synthetases. The reaction takes place in the presence of glutamine and ATP through an activated phospho-Asp-tRNA(Asn) or phospho-Glu-tRNA(Gln).</text>
</comment>
<comment type="catalytic activity">
    <reaction evidence="1">
        <text>L-glutamyl-tRNA(Gln) + L-glutamine + ATP + H2O = L-glutaminyl-tRNA(Gln) + L-glutamate + ADP + phosphate + H(+)</text>
        <dbReference type="Rhea" id="RHEA:17521"/>
        <dbReference type="Rhea" id="RHEA-COMP:9681"/>
        <dbReference type="Rhea" id="RHEA-COMP:9684"/>
        <dbReference type="ChEBI" id="CHEBI:15377"/>
        <dbReference type="ChEBI" id="CHEBI:15378"/>
        <dbReference type="ChEBI" id="CHEBI:29985"/>
        <dbReference type="ChEBI" id="CHEBI:30616"/>
        <dbReference type="ChEBI" id="CHEBI:43474"/>
        <dbReference type="ChEBI" id="CHEBI:58359"/>
        <dbReference type="ChEBI" id="CHEBI:78520"/>
        <dbReference type="ChEBI" id="CHEBI:78521"/>
        <dbReference type="ChEBI" id="CHEBI:456216"/>
    </reaction>
</comment>
<comment type="catalytic activity">
    <reaction evidence="1">
        <text>L-aspartyl-tRNA(Asn) + L-glutamine + ATP + H2O = L-asparaginyl-tRNA(Asn) + L-glutamate + ADP + phosphate + 2 H(+)</text>
        <dbReference type="Rhea" id="RHEA:14513"/>
        <dbReference type="Rhea" id="RHEA-COMP:9674"/>
        <dbReference type="Rhea" id="RHEA-COMP:9677"/>
        <dbReference type="ChEBI" id="CHEBI:15377"/>
        <dbReference type="ChEBI" id="CHEBI:15378"/>
        <dbReference type="ChEBI" id="CHEBI:29985"/>
        <dbReference type="ChEBI" id="CHEBI:30616"/>
        <dbReference type="ChEBI" id="CHEBI:43474"/>
        <dbReference type="ChEBI" id="CHEBI:58359"/>
        <dbReference type="ChEBI" id="CHEBI:78515"/>
        <dbReference type="ChEBI" id="CHEBI:78516"/>
        <dbReference type="ChEBI" id="CHEBI:456216"/>
    </reaction>
</comment>
<comment type="subunit">
    <text evidence="1">Heterotrimer of A, B and C subunits.</text>
</comment>
<comment type="similarity">
    <text evidence="1">Belongs to the GatB/GatE family. GatB subfamily.</text>
</comment>
<name>GATB_RHOE4</name>
<proteinExistence type="inferred from homology"/>
<protein>
    <recommendedName>
        <fullName evidence="1">Aspartyl/glutamyl-tRNA(Asn/Gln) amidotransferase subunit B</fullName>
        <shortName evidence="1">Asp/Glu-ADT subunit B</shortName>
        <ecNumber evidence="1">6.3.5.-</ecNumber>
    </recommendedName>
</protein>